<gene>
    <name evidence="1" type="primary">nrdR</name>
    <name type="ordered locus">LBA1546</name>
</gene>
<feature type="chain" id="PRO_0000230873" description="Transcriptional repressor NrdR">
    <location>
        <begin position="1"/>
        <end position="155"/>
    </location>
</feature>
<feature type="domain" description="ATP-cone" evidence="1">
    <location>
        <begin position="49"/>
        <end position="139"/>
    </location>
</feature>
<feature type="zinc finger region" evidence="1">
    <location>
        <begin position="3"/>
        <end position="34"/>
    </location>
</feature>
<feature type="region of interest" description="Disordered" evidence="2">
    <location>
        <begin position="1"/>
        <end position="22"/>
    </location>
</feature>
<feature type="compositionally biased region" description="Polar residues" evidence="2">
    <location>
        <begin position="1"/>
        <end position="11"/>
    </location>
</feature>
<proteinExistence type="inferred from homology"/>
<evidence type="ECO:0000255" key="1">
    <source>
        <dbReference type="HAMAP-Rule" id="MF_00440"/>
    </source>
</evidence>
<evidence type="ECO:0000256" key="2">
    <source>
        <dbReference type="SAM" id="MobiDB-lite"/>
    </source>
</evidence>
<reference key="1">
    <citation type="journal article" date="2005" name="Proc. Natl. Acad. Sci. U.S.A.">
        <title>Complete genome sequence of the probiotic lactic acid bacterium Lactobacillus acidophilus NCFM.</title>
        <authorList>
            <person name="Altermann E."/>
            <person name="Russell W.M."/>
            <person name="Azcarate-Peril M.A."/>
            <person name="Barrangou R."/>
            <person name="Buck B.L."/>
            <person name="McAuliffe O."/>
            <person name="Souther N."/>
            <person name="Dobson A."/>
            <person name="Duong T."/>
            <person name="Callanan M."/>
            <person name="Lick S."/>
            <person name="Hamrick A."/>
            <person name="Cano R."/>
            <person name="Klaenhammer T.R."/>
        </authorList>
    </citation>
    <scope>NUCLEOTIDE SEQUENCE [LARGE SCALE GENOMIC DNA]</scope>
    <source>
        <strain>ATCC 700396 / NCK56 / N2 / NCFM</strain>
    </source>
</reference>
<name>NRDR_LACAC</name>
<dbReference type="EMBL" id="CP000033">
    <property type="protein sequence ID" value="AAV43364.1"/>
    <property type="molecule type" value="Genomic_DNA"/>
</dbReference>
<dbReference type="RefSeq" id="WP_003548345.1">
    <property type="nucleotide sequence ID" value="NC_006814.3"/>
</dbReference>
<dbReference type="RefSeq" id="YP_194395.1">
    <property type="nucleotide sequence ID" value="NC_006814.3"/>
</dbReference>
<dbReference type="SMR" id="Q5FIW0"/>
<dbReference type="STRING" id="272621.LBA1546"/>
<dbReference type="GeneID" id="93289387"/>
<dbReference type="KEGG" id="lac:LBA1546"/>
<dbReference type="PATRIC" id="fig|272621.13.peg.1469"/>
<dbReference type="eggNOG" id="COG1327">
    <property type="taxonomic scope" value="Bacteria"/>
</dbReference>
<dbReference type="HOGENOM" id="CLU_108412_0_0_9"/>
<dbReference type="OrthoDB" id="9807461at2"/>
<dbReference type="BioCyc" id="LACI272621:G1G49-1512-MONOMER"/>
<dbReference type="Proteomes" id="UP000006381">
    <property type="component" value="Chromosome"/>
</dbReference>
<dbReference type="GO" id="GO:0005524">
    <property type="term" value="F:ATP binding"/>
    <property type="evidence" value="ECO:0007669"/>
    <property type="project" value="UniProtKB-KW"/>
</dbReference>
<dbReference type="GO" id="GO:0003677">
    <property type="term" value="F:DNA binding"/>
    <property type="evidence" value="ECO:0007669"/>
    <property type="project" value="UniProtKB-KW"/>
</dbReference>
<dbReference type="GO" id="GO:0008270">
    <property type="term" value="F:zinc ion binding"/>
    <property type="evidence" value="ECO:0007669"/>
    <property type="project" value="UniProtKB-UniRule"/>
</dbReference>
<dbReference type="GO" id="GO:0045892">
    <property type="term" value="P:negative regulation of DNA-templated transcription"/>
    <property type="evidence" value="ECO:0007669"/>
    <property type="project" value="UniProtKB-UniRule"/>
</dbReference>
<dbReference type="HAMAP" id="MF_00440">
    <property type="entry name" value="NrdR"/>
    <property type="match status" value="1"/>
</dbReference>
<dbReference type="InterPro" id="IPR005144">
    <property type="entry name" value="ATP-cone_dom"/>
</dbReference>
<dbReference type="InterPro" id="IPR055173">
    <property type="entry name" value="NrdR-like_N"/>
</dbReference>
<dbReference type="InterPro" id="IPR003796">
    <property type="entry name" value="RNR_NrdR-like"/>
</dbReference>
<dbReference type="NCBIfam" id="TIGR00244">
    <property type="entry name" value="transcriptional regulator NrdR"/>
    <property type="match status" value="1"/>
</dbReference>
<dbReference type="PANTHER" id="PTHR30455">
    <property type="entry name" value="TRANSCRIPTIONAL REPRESSOR NRDR"/>
    <property type="match status" value="1"/>
</dbReference>
<dbReference type="PANTHER" id="PTHR30455:SF2">
    <property type="entry name" value="TRANSCRIPTIONAL REPRESSOR NRDR"/>
    <property type="match status" value="1"/>
</dbReference>
<dbReference type="Pfam" id="PF03477">
    <property type="entry name" value="ATP-cone"/>
    <property type="match status" value="1"/>
</dbReference>
<dbReference type="Pfam" id="PF22811">
    <property type="entry name" value="Zn_ribbon_NrdR"/>
    <property type="match status" value="1"/>
</dbReference>
<dbReference type="PROSITE" id="PS51161">
    <property type="entry name" value="ATP_CONE"/>
    <property type="match status" value="1"/>
</dbReference>
<sequence length="155" mass="17972">MECPNCHQNASRVIDSRPSDENRAIRRRRECENCGFRFTTFERIETAPLLVVKNDGTREPFSRKKILHGVMAAGQKRPISSEQFEHLVDQVENKVRKQGVSEISSKKIGQYVMDDLADLDDVAYIRFASIYREFKDMSSFMKTMEDMMAKKEKGN</sequence>
<organism>
    <name type="scientific">Lactobacillus acidophilus (strain ATCC 700396 / NCK56 / N2 / NCFM)</name>
    <dbReference type="NCBI Taxonomy" id="272621"/>
    <lineage>
        <taxon>Bacteria</taxon>
        <taxon>Bacillati</taxon>
        <taxon>Bacillota</taxon>
        <taxon>Bacilli</taxon>
        <taxon>Lactobacillales</taxon>
        <taxon>Lactobacillaceae</taxon>
        <taxon>Lactobacillus</taxon>
    </lineage>
</organism>
<accession>Q5FIW0</accession>
<keyword id="KW-0067">ATP-binding</keyword>
<keyword id="KW-0238">DNA-binding</keyword>
<keyword id="KW-0479">Metal-binding</keyword>
<keyword id="KW-0547">Nucleotide-binding</keyword>
<keyword id="KW-1185">Reference proteome</keyword>
<keyword id="KW-0678">Repressor</keyword>
<keyword id="KW-0804">Transcription</keyword>
<keyword id="KW-0805">Transcription regulation</keyword>
<keyword id="KW-0862">Zinc</keyword>
<keyword id="KW-0863">Zinc-finger</keyword>
<protein>
    <recommendedName>
        <fullName evidence="1">Transcriptional repressor NrdR</fullName>
    </recommendedName>
</protein>
<comment type="function">
    <text evidence="1">Negatively regulates transcription of bacterial ribonucleotide reductase nrd genes and operons by binding to NrdR-boxes.</text>
</comment>
<comment type="cofactor">
    <cofactor evidence="1">
        <name>Zn(2+)</name>
        <dbReference type="ChEBI" id="CHEBI:29105"/>
    </cofactor>
    <text evidence="1">Binds 1 zinc ion.</text>
</comment>
<comment type="similarity">
    <text evidence="1">Belongs to the NrdR family.</text>
</comment>